<name>YOSF_SCHPO</name>
<organism>
    <name type="scientific">Schizosaccharomyces pombe (strain 972 / ATCC 24843)</name>
    <name type="common">Fission yeast</name>
    <dbReference type="NCBI Taxonomy" id="284812"/>
    <lineage>
        <taxon>Eukaryota</taxon>
        <taxon>Fungi</taxon>
        <taxon>Dikarya</taxon>
        <taxon>Ascomycota</taxon>
        <taxon>Taphrinomycotina</taxon>
        <taxon>Schizosaccharomycetes</taxon>
        <taxon>Schizosaccharomycetales</taxon>
        <taxon>Schizosaccharomycetaceae</taxon>
        <taxon>Schizosaccharomyces</taxon>
    </lineage>
</organism>
<comment type="subcellular location">
    <subcellularLocation>
        <location evidence="4">Cytoplasm</location>
    </subcellularLocation>
    <subcellularLocation>
        <location evidence="4">Nucleus</location>
    </subcellularLocation>
</comment>
<comment type="similarity">
    <text evidence="5">Belongs to the aldehyde dehydrogenase family.</text>
</comment>
<proteinExistence type="inferred from homology"/>
<accession>Q9P7K9</accession>
<feature type="chain" id="PRO_0000310350" description="Putative aldehyde dehydrogenase-like protein C21C3">
    <location>
        <begin position="1"/>
        <end position="522"/>
    </location>
</feature>
<feature type="active site" description="Proton acceptor" evidence="2 3">
    <location>
        <position position="239"/>
    </location>
</feature>
<feature type="active site" description="Nucleophile" evidence="2 3">
    <location>
        <position position="273"/>
    </location>
</feature>
<feature type="site" description="Transition state stabilizer" evidence="1">
    <location>
        <position position="138"/>
    </location>
</feature>
<protein>
    <recommendedName>
        <fullName>Putative aldehyde dehydrogenase-like protein C21C3</fullName>
        <ecNumber>1.2.1.-</ecNumber>
    </recommendedName>
</protein>
<keyword id="KW-0963">Cytoplasm</keyword>
<keyword id="KW-0539">Nucleus</keyword>
<keyword id="KW-0560">Oxidoreductase</keyword>
<keyword id="KW-1185">Reference proteome</keyword>
<evidence type="ECO:0000250" key="1"/>
<evidence type="ECO:0000255" key="2">
    <source>
        <dbReference type="PROSITE-ProRule" id="PRU10007"/>
    </source>
</evidence>
<evidence type="ECO:0000255" key="3">
    <source>
        <dbReference type="PROSITE-ProRule" id="PRU10008"/>
    </source>
</evidence>
<evidence type="ECO:0000269" key="4">
    <source>
    </source>
</evidence>
<evidence type="ECO:0000305" key="5"/>
<gene>
    <name type="ORF">SPBC21C3.15c</name>
</gene>
<dbReference type="EC" id="1.2.1.-"/>
<dbReference type="EMBL" id="CU329671">
    <property type="protein sequence ID" value="CAB76051.1"/>
    <property type="molecule type" value="Genomic_DNA"/>
</dbReference>
<dbReference type="PIR" id="T50359">
    <property type="entry name" value="T50359"/>
</dbReference>
<dbReference type="RefSeq" id="NP_596595.1">
    <property type="nucleotide sequence ID" value="NM_001022515.2"/>
</dbReference>
<dbReference type="SMR" id="Q9P7K9"/>
<dbReference type="BioGRID" id="277036">
    <property type="interactions" value="1"/>
</dbReference>
<dbReference type="FunCoup" id="Q9P7K9">
    <property type="interactions" value="63"/>
</dbReference>
<dbReference type="STRING" id="284812.Q9P7K9"/>
<dbReference type="iPTMnet" id="Q9P7K9"/>
<dbReference type="PaxDb" id="4896-SPBC21C3.15c.1"/>
<dbReference type="EnsemblFungi" id="SPBC21C3.15c.1">
    <property type="protein sequence ID" value="SPBC21C3.15c.1:pep"/>
    <property type="gene ID" value="SPBC21C3.15c"/>
</dbReference>
<dbReference type="KEGG" id="spo:2540508"/>
<dbReference type="PomBase" id="SPBC21C3.15c"/>
<dbReference type="VEuPathDB" id="FungiDB:SPBC21C3.15c"/>
<dbReference type="eggNOG" id="KOG2454">
    <property type="taxonomic scope" value="Eukaryota"/>
</dbReference>
<dbReference type="HOGENOM" id="CLU_005391_1_0_1"/>
<dbReference type="InParanoid" id="Q9P7K9"/>
<dbReference type="OMA" id="ILMRGTF"/>
<dbReference type="PhylomeDB" id="Q9P7K9"/>
<dbReference type="PRO" id="PR:Q9P7K9"/>
<dbReference type="Proteomes" id="UP000002485">
    <property type="component" value="Chromosome II"/>
</dbReference>
<dbReference type="GO" id="GO:0005737">
    <property type="term" value="C:cytoplasm"/>
    <property type="evidence" value="ECO:0007005"/>
    <property type="project" value="PomBase"/>
</dbReference>
<dbReference type="GO" id="GO:0005829">
    <property type="term" value="C:cytosol"/>
    <property type="evidence" value="ECO:0007005"/>
    <property type="project" value="PomBase"/>
</dbReference>
<dbReference type="GO" id="GO:0005634">
    <property type="term" value="C:nucleus"/>
    <property type="evidence" value="ECO:0007005"/>
    <property type="project" value="PomBase"/>
</dbReference>
<dbReference type="GO" id="GO:0004029">
    <property type="term" value="F:aldehyde dehydrogenase (NAD+) activity"/>
    <property type="evidence" value="ECO:0000318"/>
    <property type="project" value="GO_Central"/>
</dbReference>
<dbReference type="CDD" id="cd07098">
    <property type="entry name" value="ALDH_F15-22"/>
    <property type="match status" value="1"/>
</dbReference>
<dbReference type="FunFam" id="3.40.309.10:FF:000024">
    <property type="entry name" value="Betaine aldehyde dehydrogenase"/>
    <property type="match status" value="1"/>
</dbReference>
<dbReference type="Gene3D" id="3.40.605.10">
    <property type="entry name" value="Aldehyde Dehydrogenase, Chain A, domain 1"/>
    <property type="match status" value="1"/>
</dbReference>
<dbReference type="Gene3D" id="3.40.309.10">
    <property type="entry name" value="Aldehyde Dehydrogenase, Chain A, domain 2"/>
    <property type="match status" value="1"/>
</dbReference>
<dbReference type="InterPro" id="IPR016161">
    <property type="entry name" value="Ald_DH/histidinol_DH"/>
</dbReference>
<dbReference type="InterPro" id="IPR016163">
    <property type="entry name" value="Ald_DH_C"/>
</dbReference>
<dbReference type="InterPro" id="IPR016160">
    <property type="entry name" value="Ald_DH_CS_CYS"/>
</dbReference>
<dbReference type="InterPro" id="IPR029510">
    <property type="entry name" value="Ald_DH_CS_GLU"/>
</dbReference>
<dbReference type="InterPro" id="IPR016162">
    <property type="entry name" value="Ald_DH_N"/>
</dbReference>
<dbReference type="InterPro" id="IPR015590">
    <property type="entry name" value="Aldehyde_DH_dom"/>
</dbReference>
<dbReference type="PANTHER" id="PTHR11699">
    <property type="entry name" value="ALDEHYDE DEHYDROGENASE-RELATED"/>
    <property type="match status" value="1"/>
</dbReference>
<dbReference type="Pfam" id="PF00171">
    <property type="entry name" value="Aldedh"/>
    <property type="match status" value="1"/>
</dbReference>
<dbReference type="SUPFAM" id="SSF53720">
    <property type="entry name" value="ALDH-like"/>
    <property type="match status" value="1"/>
</dbReference>
<dbReference type="PROSITE" id="PS00070">
    <property type="entry name" value="ALDEHYDE_DEHYDR_CYS"/>
    <property type="match status" value="1"/>
</dbReference>
<dbReference type="PROSITE" id="PS00687">
    <property type="entry name" value="ALDEHYDE_DEHYDR_GLU"/>
    <property type="match status" value="1"/>
</dbReference>
<sequence length="522" mass="57571">MSSTLTCYCPGDGSLLGEVKLFNKSDIDQSIILAEEAQKEWKSTSFAERRNFLKALKENIIRNQDKYAEIACKDTGKTLVDAAFGEILVTLEKINWTLANGEQSLRPTKRPNSLLTSYKGGYVKYEPLGVIAALVSWNYPLHNALGPIISALFAGNAIVVKGSELTAWSTHQYCEMVRSLLQSMGHSPELVQCITCLPDVADHLTSHSGIKHITFIGSQPIAKLVAASAAKQLTPLCLELGGKDPCILTDDHRLEEILSIVMRGVFQSAGQNCIGIERIIALDGVYDTIITKLYNRISTMRLGMYTQNDVDMGAMVSNNRFDHLESLIQDAVSKGARLVYGGHRFQHPKYPKGNYFLPTLLVDATNEMKIAQEECFAPIALVFRAKSPEHALEIANGTEFGLGASVFGRDKQLCQYFTDNLETGMVAVNDFGAFYLLQMPFGGCKKSGYGRFAGYEGLRGICNSKAIAYDRFSAIHTGIPPAVDYPIPDSQKAWQFVRGLMGTVYGAWISLVPNVYQLWRNS</sequence>
<reference key="1">
    <citation type="journal article" date="2002" name="Nature">
        <title>The genome sequence of Schizosaccharomyces pombe.</title>
        <authorList>
            <person name="Wood V."/>
            <person name="Gwilliam R."/>
            <person name="Rajandream M.A."/>
            <person name="Lyne M.H."/>
            <person name="Lyne R."/>
            <person name="Stewart A."/>
            <person name="Sgouros J.G."/>
            <person name="Peat N."/>
            <person name="Hayles J."/>
            <person name="Baker S.G."/>
            <person name="Basham D."/>
            <person name="Bowman S."/>
            <person name="Brooks K."/>
            <person name="Brown D."/>
            <person name="Brown S."/>
            <person name="Chillingworth T."/>
            <person name="Churcher C.M."/>
            <person name="Collins M."/>
            <person name="Connor R."/>
            <person name="Cronin A."/>
            <person name="Davis P."/>
            <person name="Feltwell T."/>
            <person name="Fraser A."/>
            <person name="Gentles S."/>
            <person name="Goble A."/>
            <person name="Hamlin N."/>
            <person name="Harris D.E."/>
            <person name="Hidalgo J."/>
            <person name="Hodgson G."/>
            <person name="Holroyd S."/>
            <person name="Hornsby T."/>
            <person name="Howarth S."/>
            <person name="Huckle E.J."/>
            <person name="Hunt S."/>
            <person name="Jagels K."/>
            <person name="James K.D."/>
            <person name="Jones L."/>
            <person name="Jones M."/>
            <person name="Leather S."/>
            <person name="McDonald S."/>
            <person name="McLean J."/>
            <person name="Mooney P."/>
            <person name="Moule S."/>
            <person name="Mungall K.L."/>
            <person name="Murphy L.D."/>
            <person name="Niblett D."/>
            <person name="Odell C."/>
            <person name="Oliver K."/>
            <person name="O'Neil S."/>
            <person name="Pearson D."/>
            <person name="Quail M.A."/>
            <person name="Rabbinowitsch E."/>
            <person name="Rutherford K.M."/>
            <person name="Rutter S."/>
            <person name="Saunders D."/>
            <person name="Seeger K."/>
            <person name="Sharp S."/>
            <person name="Skelton J."/>
            <person name="Simmonds M.N."/>
            <person name="Squares R."/>
            <person name="Squares S."/>
            <person name="Stevens K."/>
            <person name="Taylor K."/>
            <person name="Taylor R.G."/>
            <person name="Tivey A."/>
            <person name="Walsh S.V."/>
            <person name="Warren T."/>
            <person name="Whitehead S."/>
            <person name="Woodward J.R."/>
            <person name="Volckaert G."/>
            <person name="Aert R."/>
            <person name="Robben J."/>
            <person name="Grymonprez B."/>
            <person name="Weltjens I."/>
            <person name="Vanstreels E."/>
            <person name="Rieger M."/>
            <person name="Schaefer M."/>
            <person name="Mueller-Auer S."/>
            <person name="Gabel C."/>
            <person name="Fuchs M."/>
            <person name="Duesterhoeft A."/>
            <person name="Fritzc C."/>
            <person name="Holzer E."/>
            <person name="Moestl D."/>
            <person name="Hilbert H."/>
            <person name="Borzym K."/>
            <person name="Langer I."/>
            <person name="Beck A."/>
            <person name="Lehrach H."/>
            <person name="Reinhardt R."/>
            <person name="Pohl T.M."/>
            <person name="Eger P."/>
            <person name="Zimmermann W."/>
            <person name="Wedler H."/>
            <person name="Wambutt R."/>
            <person name="Purnelle B."/>
            <person name="Goffeau A."/>
            <person name="Cadieu E."/>
            <person name="Dreano S."/>
            <person name="Gloux S."/>
            <person name="Lelaure V."/>
            <person name="Mottier S."/>
            <person name="Galibert F."/>
            <person name="Aves S.J."/>
            <person name="Xiang Z."/>
            <person name="Hunt C."/>
            <person name="Moore K."/>
            <person name="Hurst S.M."/>
            <person name="Lucas M."/>
            <person name="Rochet M."/>
            <person name="Gaillardin C."/>
            <person name="Tallada V.A."/>
            <person name="Garzon A."/>
            <person name="Thode G."/>
            <person name="Daga R.R."/>
            <person name="Cruzado L."/>
            <person name="Jimenez J."/>
            <person name="Sanchez M."/>
            <person name="del Rey F."/>
            <person name="Benito J."/>
            <person name="Dominguez A."/>
            <person name="Revuelta J.L."/>
            <person name="Moreno S."/>
            <person name="Armstrong J."/>
            <person name="Forsburg S.L."/>
            <person name="Cerutti L."/>
            <person name="Lowe T."/>
            <person name="McCombie W.R."/>
            <person name="Paulsen I."/>
            <person name="Potashkin J."/>
            <person name="Shpakovski G.V."/>
            <person name="Ussery D."/>
            <person name="Barrell B.G."/>
            <person name="Nurse P."/>
        </authorList>
    </citation>
    <scope>NUCLEOTIDE SEQUENCE [LARGE SCALE GENOMIC DNA]</scope>
    <source>
        <strain>972 / ATCC 24843</strain>
    </source>
</reference>
<reference key="2">
    <citation type="journal article" date="2006" name="Nat. Biotechnol.">
        <title>ORFeome cloning and global analysis of protein localization in the fission yeast Schizosaccharomyces pombe.</title>
        <authorList>
            <person name="Matsuyama A."/>
            <person name="Arai R."/>
            <person name="Yashiroda Y."/>
            <person name="Shirai A."/>
            <person name="Kamata A."/>
            <person name="Sekido S."/>
            <person name="Kobayashi Y."/>
            <person name="Hashimoto A."/>
            <person name="Hamamoto M."/>
            <person name="Hiraoka Y."/>
            <person name="Horinouchi S."/>
            <person name="Yoshida M."/>
        </authorList>
    </citation>
    <scope>SUBCELLULAR LOCATION [LARGE SCALE ANALYSIS]</scope>
</reference>